<evidence type="ECO:0000255" key="1">
    <source>
        <dbReference type="HAMAP-Rule" id="MF_00530"/>
    </source>
</evidence>
<proteinExistence type="inferred from homology"/>
<dbReference type="EMBL" id="CP000143">
    <property type="protein sequence ID" value="ABA78454.1"/>
    <property type="molecule type" value="Genomic_DNA"/>
</dbReference>
<dbReference type="RefSeq" id="WP_011337387.1">
    <property type="nucleotide sequence ID" value="NC_007493.2"/>
</dbReference>
<dbReference type="RefSeq" id="YP_352355.1">
    <property type="nucleotide sequence ID" value="NC_007493.2"/>
</dbReference>
<dbReference type="SMR" id="Q3J430"/>
<dbReference type="STRING" id="272943.RSP_2300"/>
<dbReference type="EnsemblBacteria" id="ABA78454">
    <property type="protein sequence ID" value="ABA78454"/>
    <property type="gene ID" value="RSP_2300"/>
</dbReference>
<dbReference type="GeneID" id="3719831"/>
<dbReference type="KEGG" id="rsp:RSP_2300"/>
<dbReference type="PATRIC" id="fig|272943.9.peg.1211"/>
<dbReference type="eggNOG" id="COG0355">
    <property type="taxonomic scope" value="Bacteria"/>
</dbReference>
<dbReference type="OrthoDB" id="9799969at2"/>
<dbReference type="PhylomeDB" id="Q3J430"/>
<dbReference type="Proteomes" id="UP000002703">
    <property type="component" value="Chromosome 1"/>
</dbReference>
<dbReference type="GO" id="GO:0005886">
    <property type="term" value="C:plasma membrane"/>
    <property type="evidence" value="ECO:0007669"/>
    <property type="project" value="UniProtKB-SubCell"/>
</dbReference>
<dbReference type="GO" id="GO:0045259">
    <property type="term" value="C:proton-transporting ATP synthase complex"/>
    <property type="evidence" value="ECO:0007669"/>
    <property type="project" value="UniProtKB-KW"/>
</dbReference>
<dbReference type="GO" id="GO:0005524">
    <property type="term" value="F:ATP binding"/>
    <property type="evidence" value="ECO:0007669"/>
    <property type="project" value="UniProtKB-UniRule"/>
</dbReference>
<dbReference type="GO" id="GO:0046933">
    <property type="term" value="F:proton-transporting ATP synthase activity, rotational mechanism"/>
    <property type="evidence" value="ECO:0007669"/>
    <property type="project" value="UniProtKB-UniRule"/>
</dbReference>
<dbReference type="CDD" id="cd12152">
    <property type="entry name" value="F1-ATPase_delta"/>
    <property type="match status" value="1"/>
</dbReference>
<dbReference type="Gene3D" id="2.60.15.10">
    <property type="entry name" value="F0F1 ATP synthase delta/epsilon subunit, N-terminal"/>
    <property type="match status" value="1"/>
</dbReference>
<dbReference type="HAMAP" id="MF_00530">
    <property type="entry name" value="ATP_synth_epsil_bac"/>
    <property type="match status" value="1"/>
</dbReference>
<dbReference type="InterPro" id="IPR001469">
    <property type="entry name" value="ATP_synth_F1_dsu/esu"/>
</dbReference>
<dbReference type="InterPro" id="IPR020546">
    <property type="entry name" value="ATP_synth_F1_dsu/esu_N"/>
</dbReference>
<dbReference type="InterPro" id="IPR036771">
    <property type="entry name" value="ATPsynth_dsu/esu_N"/>
</dbReference>
<dbReference type="NCBIfam" id="TIGR01216">
    <property type="entry name" value="ATP_synt_epsi"/>
    <property type="match status" value="1"/>
</dbReference>
<dbReference type="NCBIfam" id="NF009978">
    <property type="entry name" value="PRK13443.1"/>
    <property type="match status" value="1"/>
</dbReference>
<dbReference type="PANTHER" id="PTHR13822">
    <property type="entry name" value="ATP SYNTHASE DELTA/EPSILON CHAIN"/>
    <property type="match status" value="1"/>
</dbReference>
<dbReference type="PANTHER" id="PTHR13822:SF10">
    <property type="entry name" value="ATP SYNTHASE EPSILON CHAIN, CHLOROPLASTIC"/>
    <property type="match status" value="1"/>
</dbReference>
<dbReference type="Pfam" id="PF02823">
    <property type="entry name" value="ATP-synt_DE_N"/>
    <property type="match status" value="1"/>
</dbReference>
<dbReference type="SUPFAM" id="SSF51344">
    <property type="entry name" value="Epsilon subunit of F1F0-ATP synthase N-terminal domain"/>
    <property type="match status" value="1"/>
</dbReference>
<keyword id="KW-0066">ATP synthesis</keyword>
<keyword id="KW-0997">Cell inner membrane</keyword>
<keyword id="KW-1003">Cell membrane</keyword>
<keyword id="KW-0139">CF(1)</keyword>
<keyword id="KW-0375">Hydrogen ion transport</keyword>
<keyword id="KW-0406">Ion transport</keyword>
<keyword id="KW-0472">Membrane</keyword>
<keyword id="KW-1185">Reference proteome</keyword>
<keyword id="KW-0813">Transport</keyword>
<reference key="1">
    <citation type="submission" date="2005-09" db="EMBL/GenBank/DDBJ databases">
        <title>Complete sequence of chromosome 1 of Rhodobacter sphaeroides 2.4.1.</title>
        <authorList>
            <person name="Copeland A."/>
            <person name="Lucas S."/>
            <person name="Lapidus A."/>
            <person name="Barry K."/>
            <person name="Detter J.C."/>
            <person name="Glavina T."/>
            <person name="Hammon N."/>
            <person name="Israni S."/>
            <person name="Pitluck S."/>
            <person name="Richardson P."/>
            <person name="Mackenzie C."/>
            <person name="Choudhary M."/>
            <person name="Larimer F."/>
            <person name="Hauser L.J."/>
            <person name="Land M."/>
            <person name="Donohue T.J."/>
            <person name="Kaplan S."/>
        </authorList>
    </citation>
    <scope>NUCLEOTIDE SEQUENCE [LARGE SCALE GENOMIC DNA]</scope>
    <source>
        <strain>ATCC 17023 / DSM 158 / JCM 6121 / CCUG 31486 / LMG 2827 / NBRC 12203 / NCIMB 8253 / ATH 2.4.1.</strain>
    </source>
</reference>
<organism>
    <name type="scientific">Cereibacter sphaeroides (strain ATCC 17023 / DSM 158 / JCM 6121 / CCUG 31486 / LMG 2827 / NBRC 12203 / NCIMB 8253 / ATH 2.4.1.)</name>
    <name type="common">Rhodobacter sphaeroides</name>
    <dbReference type="NCBI Taxonomy" id="272943"/>
    <lineage>
        <taxon>Bacteria</taxon>
        <taxon>Pseudomonadati</taxon>
        <taxon>Pseudomonadota</taxon>
        <taxon>Alphaproteobacteria</taxon>
        <taxon>Rhodobacterales</taxon>
        <taxon>Paracoccaceae</taxon>
        <taxon>Cereibacter</taxon>
    </lineage>
</organism>
<accession>Q3J430</accession>
<protein>
    <recommendedName>
        <fullName evidence="1">ATP synthase epsilon chain 1</fullName>
    </recommendedName>
    <alternativeName>
        <fullName evidence="1">ATP synthase F1 sector epsilon subunit 1</fullName>
    </alternativeName>
    <alternativeName>
        <fullName evidence="1">F-ATPase epsilon subunit 1</fullName>
    </alternativeName>
</protein>
<sequence>MAGTLQFDIVSPERRLASFAATEVQVPGTDGDMTAMEGHAPTITTLRPGILRAHGPSGVQAYAVTGGFAEINATSISVLAEKAVAVEELTGTVLDEFIAEARELASVALPEDRDMAERTLNDMLALKASSGH</sequence>
<gene>
    <name evidence="1" type="primary">atpC1</name>
    <name type="ordered locus">RHOS4_08860</name>
    <name type="ORF">RSP_2300</name>
</gene>
<comment type="function">
    <text evidence="1">Produces ATP from ADP in the presence of a proton gradient across the membrane.</text>
</comment>
<comment type="subunit">
    <text>F-type ATPases have 2 components, CF(1) - the catalytic core - and CF(0) - the membrane proton channel. CF(1) has five subunits: alpha(3), beta(3), gamma(1), delta(1), epsilon(1). CF(0) has three main subunits: a, b and c.</text>
</comment>
<comment type="subcellular location">
    <subcellularLocation>
        <location evidence="1">Cell inner membrane</location>
        <topology evidence="1">Peripheral membrane protein</topology>
    </subcellularLocation>
</comment>
<comment type="similarity">
    <text evidence="1">Belongs to the ATPase epsilon chain family.</text>
</comment>
<feature type="chain" id="PRO_0000265872" description="ATP synthase epsilon chain 1">
    <location>
        <begin position="1"/>
        <end position="132"/>
    </location>
</feature>
<name>ATPE1_CERS4</name>